<organismHost>
    <name type="scientific">Homo sapiens</name>
    <name type="common">Human</name>
    <dbReference type="NCBI Taxonomy" id="9606"/>
</organismHost>
<evidence type="ECO:0000255" key="1">
    <source>
        <dbReference type="HAMAP-Rule" id="MF_04079"/>
    </source>
</evidence>
<evidence type="ECO:0000256" key="2">
    <source>
        <dbReference type="SAM" id="MobiDB-lite"/>
    </source>
</evidence>
<evidence type="ECO:0000305" key="3"/>
<gene>
    <name evidence="1" type="primary">tat</name>
</gene>
<organism>
    <name type="scientific">Human immunodeficiency virus type 1 group O (isolate ANT70)</name>
    <name type="common">HIV-1</name>
    <dbReference type="NCBI Taxonomy" id="327105"/>
    <lineage>
        <taxon>Viruses</taxon>
        <taxon>Riboviria</taxon>
        <taxon>Pararnavirae</taxon>
        <taxon>Artverviricota</taxon>
        <taxon>Revtraviricetes</taxon>
        <taxon>Ortervirales</taxon>
        <taxon>Retroviridae</taxon>
        <taxon>Orthoretrovirinae</taxon>
        <taxon>Lentivirus</taxon>
        <taxon>Human immunodeficiency virus type 1</taxon>
    </lineage>
</organism>
<keyword id="KW-0007">Acetylation</keyword>
<keyword id="KW-0010">Activator</keyword>
<keyword id="KW-0014">AIDS</keyword>
<keyword id="KW-0025">Alternative splicing</keyword>
<keyword id="KW-0053">Apoptosis</keyword>
<keyword id="KW-1035">Host cytoplasm</keyword>
<keyword id="KW-1048">Host nucleus</keyword>
<keyword id="KW-0945">Host-virus interaction</keyword>
<keyword id="KW-1090">Inhibition of host innate immune response by virus</keyword>
<keyword id="KW-1114">Inhibition of host interferon signaling pathway by virus</keyword>
<keyword id="KW-0922">Interferon antiviral system evasion</keyword>
<keyword id="KW-1017">Isopeptide bond</keyword>
<keyword id="KW-0479">Metal-binding</keyword>
<keyword id="KW-0488">Methylation</keyword>
<keyword id="KW-1122">Modulation of host chromatin by virus</keyword>
<keyword id="KW-1126">Modulation of host PP1 activity by virus</keyword>
<keyword id="KW-0597">Phosphoprotein</keyword>
<keyword id="KW-1185">Reference proteome</keyword>
<keyword id="KW-0694">RNA-binding</keyword>
<keyword id="KW-0964">Secreted</keyword>
<keyword id="KW-0804">Transcription</keyword>
<keyword id="KW-0805">Transcription regulation</keyword>
<keyword id="KW-0832">Ubl conjugation</keyword>
<keyword id="KW-0899">Viral immunoevasion</keyword>
<keyword id="KW-0862">Zinc</keyword>
<accession>P0C1K1</accession>
<proteinExistence type="inferred from homology"/>
<sequence>MDPVDPEVPPWHHPGSQPQIPCNNCYCKRCCYHCYVCFVRKGLGISYGRKKRGRPAAASHPDHKDPVPKQSPTITKRKQERQEEQEEEVEKKAGPGGYPRRKGSCHCCTRTSEQ</sequence>
<dbReference type="EMBL" id="L20587">
    <property type="status" value="NOT_ANNOTATED_CDS"/>
    <property type="molecule type" value="Genomic_RNA"/>
</dbReference>
<dbReference type="SMR" id="P0C1K1"/>
<dbReference type="Proteomes" id="UP000007689">
    <property type="component" value="Segment"/>
</dbReference>
<dbReference type="GO" id="GO:0005576">
    <property type="term" value="C:extracellular region"/>
    <property type="evidence" value="ECO:0007669"/>
    <property type="project" value="UniProtKB-SubCell"/>
</dbReference>
<dbReference type="GO" id="GO:0030430">
    <property type="term" value="C:host cell cytoplasm"/>
    <property type="evidence" value="ECO:0007669"/>
    <property type="project" value="UniProtKB-SubCell"/>
</dbReference>
<dbReference type="GO" id="GO:0044196">
    <property type="term" value="C:host cell nucleolus"/>
    <property type="evidence" value="ECO:0007669"/>
    <property type="project" value="UniProtKB-SubCell"/>
</dbReference>
<dbReference type="GO" id="GO:0042805">
    <property type="term" value="F:actinin binding"/>
    <property type="evidence" value="ECO:0007669"/>
    <property type="project" value="UniProtKB-UniRule"/>
</dbReference>
<dbReference type="GO" id="GO:0030332">
    <property type="term" value="F:cyclin binding"/>
    <property type="evidence" value="ECO:0007669"/>
    <property type="project" value="UniProtKB-UniRule"/>
</dbReference>
<dbReference type="GO" id="GO:0046872">
    <property type="term" value="F:metal ion binding"/>
    <property type="evidence" value="ECO:0007669"/>
    <property type="project" value="UniProtKB-UniRule"/>
</dbReference>
<dbReference type="GO" id="GO:0019904">
    <property type="term" value="F:protein domain specific binding"/>
    <property type="evidence" value="ECO:0007669"/>
    <property type="project" value="UniProtKB-UniRule"/>
</dbReference>
<dbReference type="GO" id="GO:0004865">
    <property type="term" value="F:protein serine/threonine phosphatase inhibitor activity"/>
    <property type="evidence" value="ECO:0007669"/>
    <property type="project" value="UniProtKB-KW"/>
</dbReference>
<dbReference type="GO" id="GO:0001070">
    <property type="term" value="F:RNA-binding transcription regulator activity"/>
    <property type="evidence" value="ECO:0007669"/>
    <property type="project" value="UniProtKB-UniRule"/>
</dbReference>
<dbReference type="GO" id="GO:1990970">
    <property type="term" value="F:trans-activation response element binding"/>
    <property type="evidence" value="ECO:0007669"/>
    <property type="project" value="UniProtKB-UniRule"/>
</dbReference>
<dbReference type="GO" id="GO:0006351">
    <property type="term" value="P:DNA-templated transcription"/>
    <property type="evidence" value="ECO:0007669"/>
    <property type="project" value="UniProtKB-UniRule"/>
</dbReference>
<dbReference type="GO" id="GO:0032968">
    <property type="term" value="P:positive regulation of transcription elongation by RNA polymerase II"/>
    <property type="evidence" value="ECO:0007669"/>
    <property type="project" value="UniProtKB-UniRule"/>
</dbReference>
<dbReference type="GO" id="GO:0050434">
    <property type="term" value="P:positive regulation of viral transcription"/>
    <property type="evidence" value="ECO:0007669"/>
    <property type="project" value="UniProtKB-UniRule"/>
</dbReference>
<dbReference type="GO" id="GO:0039525">
    <property type="term" value="P:symbiont-mediated perturbation of host chromatin organization"/>
    <property type="evidence" value="ECO:0007669"/>
    <property type="project" value="UniProtKB-UniRule"/>
</dbReference>
<dbReference type="GO" id="GO:0052170">
    <property type="term" value="P:symbiont-mediated suppression of host innate immune response"/>
    <property type="evidence" value="ECO:0007669"/>
    <property type="project" value="UniProtKB-KW"/>
</dbReference>
<dbReference type="GO" id="GO:0039606">
    <property type="term" value="P:symbiont-mediated suppression of host translation initiation"/>
    <property type="evidence" value="ECO:0007669"/>
    <property type="project" value="UniProtKB-KW"/>
</dbReference>
<dbReference type="GO" id="GO:0039502">
    <property type="term" value="P:symbiont-mediated suppression of host type I interferon-mediated signaling pathway"/>
    <property type="evidence" value="ECO:0007669"/>
    <property type="project" value="UniProtKB-UniRule"/>
</dbReference>
<dbReference type="Gene3D" id="4.10.20.10">
    <property type="entry name" value="Tat domain"/>
    <property type="match status" value="1"/>
</dbReference>
<dbReference type="HAMAP" id="MF_04079">
    <property type="entry name" value="HIV_TAT"/>
    <property type="match status" value="1"/>
</dbReference>
<dbReference type="InterPro" id="IPR001831">
    <property type="entry name" value="IV_Tat"/>
</dbReference>
<dbReference type="InterPro" id="IPR036963">
    <property type="entry name" value="Tat_dom_sf"/>
</dbReference>
<dbReference type="Pfam" id="PF00539">
    <property type="entry name" value="Tat"/>
    <property type="match status" value="1"/>
</dbReference>
<dbReference type="PRINTS" id="PR00055">
    <property type="entry name" value="HIVTATDOMAIN"/>
</dbReference>
<feature type="chain" id="PRO_0000244850" description="Protein Tat">
    <location>
        <begin position="1"/>
        <end position="114"/>
    </location>
</feature>
<feature type="region of interest" description="Transactivation" evidence="1">
    <location>
        <begin position="1"/>
        <end position="48"/>
    </location>
</feature>
<feature type="region of interest" description="Interaction with human CREBBP" evidence="1">
    <location>
        <begin position="1"/>
        <end position="24"/>
    </location>
</feature>
<feature type="region of interest" description="Cysteine-rich" evidence="1">
    <location>
        <begin position="22"/>
        <end position="37"/>
    </location>
</feature>
<feature type="region of interest" description="Core" evidence="1">
    <location>
        <begin position="38"/>
        <end position="48"/>
    </location>
</feature>
<feature type="region of interest" description="Disordered" evidence="2">
    <location>
        <begin position="48"/>
        <end position="114"/>
    </location>
</feature>
<feature type="region of interest" description="Interaction with the host capping enzyme RNGTT" evidence="1">
    <location>
        <begin position="49"/>
        <end position="84"/>
    </location>
</feature>
<feature type="short sequence motif" description="Nuclear localization signal, RNA-binding (TAR), and protein transduction" evidence="1">
    <location>
        <begin position="49"/>
        <end position="56"/>
    </location>
</feature>
<feature type="binding site" evidence="1">
    <location>
        <position position="22"/>
    </location>
    <ligand>
        <name>Zn(2+)</name>
        <dbReference type="ChEBI" id="CHEBI:29105"/>
        <label>1</label>
    </ligand>
</feature>
<feature type="binding site" evidence="1">
    <location>
        <position position="25"/>
    </location>
    <ligand>
        <name>Zn(2+)</name>
        <dbReference type="ChEBI" id="CHEBI:29105"/>
        <label>2</label>
    </ligand>
</feature>
<feature type="binding site" evidence="1">
    <location>
        <position position="27"/>
    </location>
    <ligand>
        <name>Zn(2+)</name>
        <dbReference type="ChEBI" id="CHEBI:29105"/>
        <label>2</label>
    </ligand>
</feature>
<feature type="binding site" evidence="1">
    <location>
        <position position="30"/>
    </location>
    <ligand>
        <name>Zn(2+)</name>
        <dbReference type="ChEBI" id="CHEBI:29105"/>
        <label>2</label>
    </ligand>
</feature>
<feature type="binding site" evidence="1">
    <location>
        <position position="33"/>
    </location>
    <ligand>
        <name>Zn(2+)</name>
        <dbReference type="ChEBI" id="CHEBI:29105"/>
        <label>1</label>
    </ligand>
</feature>
<feature type="binding site" evidence="1">
    <location>
        <position position="34"/>
    </location>
    <ligand>
        <name>Zn(2+)</name>
        <dbReference type="ChEBI" id="CHEBI:29105"/>
        <label>1</label>
    </ligand>
</feature>
<feature type="binding site" evidence="1">
    <location>
        <position position="37"/>
    </location>
    <ligand>
        <name>Zn(2+)</name>
        <dbReference type="ChEBI" id="CHEBI:29105"/>
        <label>1</label>
    </ligand>
</feature>
<feature type="site" description="Essential for Tat translocation through the endosomal membrane" evidence="1">
    <location>
        <position position="11"/>
    </location>
</feature>
<feature type="modified residue" description="N6-acetyllysine; by host PCAF" evidence="1">
    <location>
        <position position="28"/>
    </location>
</feature>
<feature type="modified residue" description="N6-acetyllysine; by host EP300 and GCN5L2" evidence="1">
    <location>
        <position position="50"/>
    </location>
</feature>
<feature type="modified residue" description="N6-acetyllysine; by host EP300 and GCN5L2" evidence="1">
    <location>
        <position position="51"/>
    </location>
</feature>
<feature type="modified residue" description="Asymmetric dimethylarginine; by host PRMT6" evidence="1">
    <location>
        <position position="52"/>
    </location>
</feature>
<feature type="cross-link" description="Glycyl lysine isopeptide (Lys-Gly) (interchain with G-Cter in ubiquitin)" evidence="1">
    <location>
        <position position="69"/>
    </location>
</feature>
<feature type="splice variant" id="VSP_022405" description="In isoform Short.">
    <location>
        <begin position="71"/>
        <end position="114"/>
    </location>
</feature>
<protein>
    <recommendedName>
        <fullName evidence="1">Protein Tat</fullName>
    </recommendedName>
    <alternativeName>
        <fullName evidence="1">Transactivating regulatory protein</fullName>
    </alternativeName>
</protein>
<reference key="1">
    <citation type="journal article" date="1994" name="J. Virol.">
        <title>Genomic cloning and complete sequence analysis of a highly divergent African human immunodeficiency virus isolate.</title>
        <authorList>
            <person name="Vanden Haesevelde M."/>
            <person name="Decourt J.L."/>
            <person name="De Leys R.J."/>
            <person name="Vanderborght B."/>
            <person name="van der Groen G."/>
            <person name="van Heuverswijn H."/>
            <person name="Saman E."/>
        </authorList>
    </citation>
    <scope>NUCLEOTIDE SEQUENCE [GENOMIC RNA]</scope>
</reference>
<reference key="2">
    <citation type="journal article" date="2005" name="Microbes Infect.">
        <title>Decoding Tat: the biology of HIV Tat posttranslational modifications.</title>
        <authorList>
            <person name="Hetzer C."/>
            <person name="Dormeyer W."/>
            <person name="Schnolzer M."/>
            <person name="Ott M."/>
        </authorList>
    </citation>
    <scope>REVIEW</scope>
    <scope>ALTERNATIVE SPLICING</scope>
</reference>
<reference key="3">
    <citation type="journal article" date="2006" name="Front. Biosci.">
        <title>The multiple functions of HIV-1 Tat: proliferation versus apoptosis.</title>
        <authorList>
            <person name="Peruzzi F."/>
        </authorList>
    </citation>
    <scope>REVIEW</scope>
</reference>
<reference key="4">
    <citation type="journal article" date="2006" name="Microbes Infect.">
        <title>HIV tat and neurotoxicity.</title>
        <authorList>
            <person name="King J.E."/>
            <person name="Eugenin E.A."/>
            <person name="Buckner C.M."/>
            <person name="Berman J.W."/>
        </authorList>
    </citation>
    <scope>REVIEW</scope>
</reference>
<comment type="function">
    <text evidence="1">Transcriptional activator that increases RNA Pol II processivity, thereby increasing the level of full-length viral transcripts. Recognizes a hairpin structure at the 5'-LTR of the nascent viral mRNAs referred to as the transactivation responsive RNA element (TAR) and recruits the cyclin T1-CDK9 complex (P-TEFb complex) that will in turn hyperphosphorylate the RNA polymerase II to allow efficient elongation. The CDK9 component of P-TEFb and other Tat-activated kinases hyperphosphorylate the C-terminus of RNA Pol II that becomes stabilized and much more processive. Other factors such as HTATSF1/Tat-SF1, SUPT5H/SPT5, and HTATIP2 are also important for Tat's function. Besides its effect on RNA Pol II processivity, Tat induces chromatin remodeling of proviral genes by recruiting the histone acetyltransferases (HATs) CREBBP, EP300 and PCAF to the chromatin. This also contributes to the increase in proviral transcription rate, especially when the provirus integrates in transcriptionally silent region of the host genome. To ensure maximal activation of the LTR, Tat mediates nuclear translocation of NF-kappa-B by interacting with host RELA. Through its interaction with host TBP, Tat may also modulate transcription initiation. Tat can reactivate a latently infected cell by penetrating in it and transactivating its LTR promoter. In the cytoplasm, Tat is thought to act as a translational activator of HIV-1 mRNAs.</text>
</comment>
<comment type="function">
    <text evidence="1">Extracellular circulating Tat can be endocytosed by surrounding uninfected cells via the binding to several surface receptors such as CD26, CXCR4, heparan sulfate proteoglycans (HSPG) or LDLR. Neurons are rarely infected, but they internalize Tat via their LDLR. Through its interaction with nuclear HATs, Tat is potentially able to control the acetylation-dependent cellular gene expression. Modulates the expression of many cellular genes involved in cell survival, proliferation or in coding for cytokines or cytokine receptors. Tat plays a role in T-cell and neurons apoptosis. Tat induced neurotoxicity and apoptosis probably contribute to neuroAIDS. Circulating Tat also acts as a chemokine-like and/or growth factor-like molecule that binds to specific receptors on the surface of the cells, affecting many cellular pathways. In the vascular system, Tat binds to ITGAV/ITGB3 and ITGA5/ITGB1 integrins dimers at the surface of endothelial cells and competes with bFGF for heparin-binding sites, leading to an excess of soluble bFGF.</text>
</comment>
<comment type="subunit">
    <text evidence="1">Interacts with host CCNT1. Associates with the P-TEFb complex composed at least of Tat, P-TEFb (CDK9 and CCNT1), TAR RNA, RNA Pol II. Recruits the HATs CREBBP, TAF1/TFIID, EP300, PCAF and GCN5L2. Interacts with host KAT5/Tip60; this interaction targets the latter to degradation. Interacts with the host deacetylase SIRT1. Interacts with host capping enzyme RNGTT; this interaction stimulates RNGTT. Binds to host KDR, and to the host integrins ITGAV/ITGB3 and ITGA5/ITGB1. Interacts with host KPNB1/importin beta-1 without previous binding to KPNA1/importin alpha-1. Interacts with EIF2AK2. Interacts with host nucleosome assembly protein NAP1L1; this interaction may be required for the transport of Tat within the nucleus, since the two proteins interact at the nuclear rim. Interacts with host C1QBP/SF2P32; this interaction involves lysine-acetylated Tat. Interacts with the host chemokine receptors CCR2, CCR3 and CXCR4. Interacts with host DPP4/CD26; this interaction may trigger an anti-proliferative effect. Interacts with host LDLR. Interacts with the host extracellular matrix metalloproteinase MMP1. Interacts with host PRMT6; this interaction mediates Tat's methylation. Interacts with, and is ubiquitinated by MDM2/Hdm2. Interacts with host PSMC3 and HTATIP2. Interacts with STAB1; this interaction may overcome SATB1-mediated repression of IL2 and IL2RA (interleukin) in T cells by binding to the same domain than HDAC1. Interacts (when acetylated) with human CDK13, thereby increasing HIV-1 mRNA splicing and promoting the production of the doubly spliced HIV-1 protein Nef. Interacts with host TBP; this interaction modulates the activity of transcriptional pre-initiation complex. Interacts with host RELA. Interacts with host PLSCR1; this interaction negatively regulates Tat transactivation activity by altering its subcellular distribution.</text>
</comment>
<comment type="subcellular location">
    <subcellularLocation>
        <location evidence="1">Host nucleus</location>
        <location evidence="1">Host nucleolus</location>
    </subcellularLocation>
    <subcellularLocation>
        <location evidence="1">Host cytoplasm</location>
    </subcellularLocation>
    <subcellularLocation>
        <location evidence="1">Secreted</location>
    </subcellularLocation>
    <text evidence="1">Probably localizes to both nuclear and nucleolar compartments. Nuclear localization is mediated through the interaction of the nuclear localization signal with importin KPNB1. Secretion occurs through a Golgi-independent pathway. Tat is released from infected cells to the extracellular space where it remains associated to the cell membrane, or is secreted into the cerebrospinal fluid and sera. Extracellular Tat can be endocytosed by surrounding uninfected cells via binding to several receptors depending on the cell type.</text>
</comment>
<comment type="alternative products">
    <event type="alternative splicing"/>
    <isoform>
        <id>P0C1K1-1</id>
        <name>Long</name>
        <sequence type="displayed"/>
    </isoform>
    <isoform>
        <id>P0C1K1-2</id>
        <name>Short</name>
        <sequence type="described" ref="VSP_022405"/>
    </isoform>
</comment>
<comment type="domain">
    <text evidence="1">The cell attachment site mediates the interaction with ITGAV/ITGB3 and ITGA5/ITGB1 integrins, leading to vascular cell migration and invasion. This interaction also provides endothelial cells with the adhesion signal they require to grow in response to mitogens.</text>
</comment>
<comment type="domain">
    <text evidence="1">The Cys-rich region may bind 2 zinc ions. This region is involved in binding to KAT5.</text>
</comment>
<comment type="domain">
    <text evidence="1">The transactivation domain mediates the interaction with CCNT1, GCN5L2, and MDM2.</text>
</comment>
<comment type="domain">
    <text evidence="1">The Arg-rich RNA-binding region binds the TAR RNA. This region also mediates the nuclear localization through direct binding to KPNB1 and is involved in Tat's transfer across cell membranes (protein transduction). The same region is required for the interaction with EP300, PCAF, EIF2AK2 and KDR.</text>
</comment>
<comment type="PTM">
    <text evidence="1">Asymmetrical arginine methylation by host PRMT6 seems to diminish the transactivation capacity of Tat and affects the interaction with host CCNT1.</text>
</comment>
<comment type="PTM">
    <text evidence="1">Acetylation by EP300, CREBBP, GCN5L2/GCN5 and PCAF regulates the transactivation activity of Tat. EP300-mediated acetylation of Lys-50 promotes dissociation of Tat from the TAR RNA through the competitive binding to PCAF's bromodomain. In addition, the non-acetylated Tat's N-terminus can also interact with PCAF. PCAF-mediated acetylation of Lys-28 enhances Tat's binding to CCNT1. Lys-50 is deacetylated by SIRT1.</text>
</comment>
<comment type="PTM">
    <text evidence="1">Polyubiquitination by host MDM2 does not target Tat to degradation, but activates its transactivation function and fosters interaction with CCNT1 and TAR RNA.</text>
</comment>
<comment type="PTM">
    <text evidence="1">Phosphorylated by EIF2AK2 on serine and threonine residues adjacent to the basic region important for TAR RNA binding and function. Phosphorylation of Tat by EIF2AK2 is dependent on the prior activation of EIF2AK2 by dsRNA.</text>
</comment>
<comment type="miscellaneous">
    <text evidence="1">HIV-1 lineages are divided in three main groups, M (for Major), O (for Outlier), and N (for New, or Non-M, Non-O). The vast majority of strains found worldwide belong to the group M. Group O seems to be endemic to and largely confined to Cameroon and neighboring countries in West Central Africa, where these viruses represent a small minority of HIV-1 strains. The group N is represented by a limited number of isolates from Cameroonian persons. The group M is further subdivided in 9 clades or subtypes (A to D, F to H, J and K).</text>
</comment>
<comment type="miscellaneous">
    <molecule>Isoform Short</molecule>
    <text evidence="3">Expressed in the late stage of the infection cycle, when unspliced viral RNAs are exported to the cytoplasm by the viral Rev protein.</text>
</comment>
<comment type="similarity">
    <text evidence="1">Belongs to the lentiviruses Tat family.</text>
</comment>
<name>TAT_HV1AN</name>